<reference key="1">
    <citation type="journal article" date="2006" name="J. Bacteriol.">
        <title>Comparison of the genome sequence of the poultry pathogen Bordetella avium with those of B. bronchiseptica, B. pertussis, and B. parapertussis reveals extensive diversity in surface structures associated with host interaction.</title>
        <authorList>
            <person name="Sebaihia M."/>
            <person name="Preston A."/>
            <person name="Maskell D.J."/>
            <person name="Kuzmiak H."/>
            <person name="Connell T.D."/>
            <person name="King N.D."/>
            <person name="Orndorff P.E."/>
            <person name="Miyamoto D.M."/>
            <person name="Thomson N.R."/>
            <person name="Harris D."/>
            <person name="Goble A."/>
            <person name="Lord A."/>
            <person name="Murphy L."/>
            <person name="Quail M.A."/>
            <person name="Rutter S."/>
            <person name="Squares R."/>
            <person name="Squares S."/>
            <person name="Woodward J."/>
            <person name="Parkhill J."/>
            <person name="Temple L.M."/>
        </authorList>
    </citation>
    <scope>NUCLEOTIDE SEQUENCE [LARGE SCALE GENOMIC DNA]</scope>
    <source>
        <strain>197N</strain>
    </source>
</reference>
<comment type="function">
    <text evidence="1">Catalyzes the oxidation of either pyridoxine 5'-phosphate (PNP) or pyridoxamine 5'-phosphate (PMP) into pyridoxal 5'-phosphate (PLP).</text>
</comment>
<comment type="catalytic activity">
    <reaction evidence="1">
        <text>pyridoxamine 5'-phosphate + O2 + H2O = pyridoxal 5'-phosphate + H2O2 + NH4(+)</text>
        <dbReference type="Rhea" id="RHEA:15817"/>
        <dbReference type="ChEBI" id="CHEBI:15377"/>
        <dbReference type="ChEBI" id="CHEBI:15379"/>
        <dbReference type="ChEBI" id="CHEBI:16240"/>
        <dbReference type="ChEBI" id="CHEBI:28938"/>
        <dbReference type="ChEBI" id="CHEBI:58451"/>
        <dbReference type="ChEBI" id="CHEBI:597326"/>
        <dbReference type="EC" id="1.4.3.5"/>
    </reaction>
</comment>
<comment type="catalytic activity">
    <reaction evidence="1">
        <text>pyridoxine 5'-phosphate + O2 = pyridoxal 5'-phosphate + H2O2</text>
        <dbReference type="Rhea" id="RHEA:15149"/>
        <dbReference type="ChEBI" id="CHEBI:15379"/>
        <dbReference type="ChEBI" id="CHEBI:16240"/>
        <dbReference type="ChEBI" id="CHEBI:58589"/>
        <dbReference type="ChEBI" id="CHEBI:597326"/>
        <dbReference type="EC" id="1.4.3.5"/>
    </reaction>
</comment>
<comment type="cofactor">
    <cofactor evidence="1">
        <name>FMN</name>
        <dbReference type="ChEBI" id="CHEBI:58210"/>
    </cofactor>
    <text evidence="1">Binds 1 FMN per subunit.</text>
</comment>
<comment type="pathway">
    <text evidence="1">Cofactor metabolism; pyridoxal 5'-phosphate salvage; pyridoxal 5'-phosphate from pyridoxamine 5'-phosphate: step 1/1.</text>
</comment>
<comment type="pathway">
    <text evidence="1">Cofactor metabolism; pyridoxal 5'-phosphate salvage; pyridoxal 5'-phosphate from pyridoxine 5'-phosphate: step 1/1.</text>
</comment>
<comment type="subunit">
    <text evidence="1">Homodimer.</text>
</comment>
<comment type="similarity">
    <text evidence="1">Belongs to the pyridoxamine 5'-phosphate oxidase family.</text>
</comment>
<feature type="chain" id="PRO_0000255854" description="Pyridoxine/pyridoxamine 5'-phosphate oxidase">
    <location>
        <begin position="1"/>
        <end position="210"/>
    </location>
</feature>
<feature type="binding site" evidence="1">
    <location>
        <begin position="7"/>
        <end position="10"/>
    </location>
    <ligand>
        <name>substrate</name>
    </ligand>
</feature>
<feature type="binding site" evidence="1">
    <location>
        <begin position="60"/>
        <end position="65"/>
    </location>
    <ligand>
        <name>FMN</name>
        <dbReference type="ChEBI" id="CHEBI:58210"/>
    </ligand>
</feature>
<feature type="binding site" evidence="1">
    <location>
        <position position="65"/>
    </location>
    <ligand>
        <name>substrate</name>
    </ligand>
</feature>
<feature type="binding site" evidence="1">
    <location>
        <begin position="75"/>
        <end position="76"/>
    </location>
    <ligand>
        <name>FMN</name>
        <dbReference type="ChEBI" id="CHEBI:58210"/>
    </ligand>
</feature>
<feature type="binding site" evidence="1">
    <location>
        <position position="81"/>
    </location>
    <ligand>
        <name>FMN</name>
        <dbReference type="ChEBI" id="CHEBI:58210"/>
    </ligand>
</feature>
<feature type="binding site" evidence="1">
    <location>
        <position position="82"/>
    </location>
    <ligand>
        <name>FMN</name>
        <dbReference type="ChEBI" id="CHEBI:58210"/>
    </ligand>
</feature>
<feature type="binding site" evidence="1">
    <location>
        <position position="104"/>
    </location>
    <ligand>
        <name>FMN</name>
        <dbReference type="ChEBI" id="CHEBI:58210"/>
    </ligand>
</feature>
<feature type="binding site" evidence="1">
    <location>
        <position position="122"/>
    </location>
    <ligand>
        <name>substrate</name>
    </ligand>
</feature>
<feature type="binding site" evidence="1">
    <location>
        <position position="126"/>
    </location>
    <ligand>
        <name>substrate</name>
    </ligand>
</feature>
<feature type="binding site" evidence="1">
    <location>
        <position position="130"/>
    </location>
    <ligand>
        <name>substrate</name>
    </ligand>
</feature>
<feature type="binding site" evidence="1">
    <location>
        <begin position="139"/>
        <end position="140"/>
    </location>
    <ligand>
        <name>FMN</name>
        <dbReference type="ChEBI" id="CHEBI:58210"/>
    </ligand>
</feature>
<feature type="binding site" evidence="1">
    <location>
        <position position="182"/>
    </location>
    <ligand>
        <name>FMN</name>
        <dbReference type="ChEBI" id="CHEBI:58210"/>
    </ligand>
</feature>
<feature type="binding site" evidence="1">
    <location>
        <begin position="188"/>
        <end position="190"/>
    </location>
    <ligand>
        <name>substrate</name>
    </ligand>
</feature>
<feature type="binding site" evidence="1">
    <location>
        <position position="192"/>
    </location>
    <ligand>
        <name>FMN</name>
        <dbReference type="ChEBI" id="CHEBI:58210"/>
    </ligand>
</feature>
<gene>
    <name evidence="1" type="primary">pdxH</name>
    <name type="ordered locus">BAV2823</name>
</gene>
<protein>
    <recommendedName>
        <fullName evidence="1">Pyridoxine/pyridoxamine 5'-phosphate oxidase</fullName>
        <ecNumber evidence="1">1.4.3.5</ecNumber>
    </recommendedName>
    <alternativeName>
        <fullName evidence="1">PNP/PMP oxidase</fullName>
        <shortName evidence="1">PNPOx</shortName>
    </alternativeName>
    <alternativeName>
        <fullName evidence="1">Pyridoxal 5'-phosphate synthase</fullName>
    </alternativeName>
</protein>
<organism>
    <name type="scientific">Bordetella avium (strain 197N)</name>
    <dbReference type="NCBI Taxonomy" id="360910"/>
    <lineage>
        <taxon>Bacteria</taxon>
        <taxon>Pseudomonadati</taxon>
        <taxon>Pseudomonadota</taxon>
        <taxon>Betaproteobacteria</taxon>
        <taxon>Burkholderiales</taxon>
        <taxon>Alcaligenaceae</taxon>
        <taxon>Bordetella</taxon>
    </lineage>
</organism>
<proteinExistence type="inferred from homology"/>
<sequence>MSVSDLRQSYERGVLLEQQAAATPIDQFALWFDEAQAAQVPEPNAMTLATVDASGQPSARIVLIKAFDARGFTFFTNYTSRKGEDLLANPRAALLFFWQALERQVRIEGVVERVSADESDAYFHSRPVGSRIGAWASEQSQPITREALEARERDFKARFGDTPPRPPHWGGYRLVPTYFEFWQGRPSRLHDRLRYRPDGKQGWVMDRLSP</sequence>
<evidence type="ECO:0000255" key="1">
    <source>
        <dbReference type="HAMAP-Rule" id="MF_01629"/>
    </source>
</evidence>
<name>PDXH_BORA1</name>
<accession>Q2KVR0</accession>
<dbReference type="EC" id="1.4.3.5" evidence="1"/>
<dbReference type="EMBL" id="AM167904">
    <property type="protein sequence ID" value="CAJ50433.1"/>
    <property type="molecule type" value="Genomic_DNA"/>
</dbReference>
<dbReference type="RefSeq" id="WP_012418463.1">
    <property type="nucleotide sequence ID" value="NC_010645.1"/>
</dbReference>
<dbReference type="SMR" id="Q2KVR0"/>
<dbReference type="STRING" id="360910.BAV2823"/>
<dbReference type="KEGG" id="bav:BAV2823"/>
<dbReference type="eggNOG" id="COG0259">
    <property type="taxonomic scope" value="Bacteria"/>
</dbReference>
<dbReference type="HOGENOM" id="CLU_032263_2_2_4"/>
<dbReference type="OrthoDB" id="9780392at2"/>
<dbReference type="UniPathway" id="UPA01068">
    <property type="reaction ID" value="UER00304"/>
</dbReference>
<dbReference type="UniPathway" id="UPA01068">
    <property type="reaction ID" value="UER00305"/>
</dbReference>
<dbReference type="Proteomes" id="UP000001977">
    <property type="component" value="Chromosome"/>
</dbReference>
<dbReference type="GO" id="GO:0010181">
    <property type="term" value="F:FMN binding"/>
    <property type="evidence" value="ECO:0007669"/>
    <property type="project" value="UniProtKB-UniRule"/>
</dbReference>
<dbReference type="GO" id="GO:0004733">
    <property type="term" value="F:pyridoxamine phosphate oxidase activity"/>
    <property type="evidence" value="ECO:0007669"/>
    <property type="project" value="UniProtKB-UniRule"/>
</dbReference>
<dbReference type="GO" id="GO:0008615">
    <property type="term" value="P:pyridoxine biosynthetic process"/>
    <property type="evidence" value="ECO:0007669"/>
    <property type="project" value="UniProtKB-KW"/>
</dbReference>
<dbReference type="FunFam" id="2.30.110.10:FF:000020">
    <property type="entry name" value="PNPO isoform 11"/>
    <property type="match status" value="1"/>
</dbReference>
<dbReference type="Gene3D" id="2.30.110.10">
    <property type="entry name" value="Electron Transport, Fmn-binding Protein, Chain A"/>
    <property type="match status" value="1"/>
</dbReference>
<dbReference type="HAMAP" id="MF_01629">
    <property type="entry name" value="PdxH"/>
    <property type="match status" value="1"/>
</dbReference>
<dbReference type="InterPro" id="IPR000659">
    <property type="entry name" value="Pyridox_Oxase"/>
</dbReference>
<dbReference type="InterPro" id="IPR019740">
    <property type="entry name" value="Pyridox_Oxase_CS"/>
</dbReference>
<dbReference type="InterPro" id="IPR011576">
    <property type="entry name" value="Pyridox_Oxase_N"/>
</dbReference>
<dbReference type="InterPro" id="IPR019576">
    <property type="entry name" value="Pyridoxamine_oxidase_dimer_C"/>
</dbReference>
<dbReference type="InterPro" id="IPR012349">
    <property type="entry name" value="Split_barrel_FMN-bd"/>
</dbReference>
<dbReference type="NCBIfam" id="TIGR00558">
    <property type="entry name" value="pdxH"/>
    <property type="match status" value="1"/>
</dbReference>
<dbReference type="NCBIfam" id="NF004231">
    <property type="entry name" value="PRK05679.1"/>
    <property type="match status" value="1"/>
</dbReference>
<dbReference type="PANTHER" id="PTHR10851:SF0">
    <property type="entry name" value="PYRIDOXINE-5'-PHOSPHATE OXIDASE"/>
    <property type="match status" value="1"/>
</dbReference>
<dbReference type="PANTHER" id="PTHR10851">
    <property type="entry name" value="PYRIDOXINE-5-PHOSPHATE OXIDASE"/>
    <property type="match status" value="1"/>
</dbReference>
<dbReference type="Pfam" id="PF10590">
    <property type="entry name" value="PNP_phzG_C"/>
    <property type="match status" value="1"/>
</dbReference>
<dbReference type="Pfam" id="PF01243">
    <property type="entry name" value="PNPOx_N"/>
    <property type="match status" value="1"/>
</dbReference>
<dbReference type="PIRSF" id="PIRSF000190">
    <property type="entry name" value="Pyd_amn-ph_oxd"/>
    <property type="match status" value="1"/>
</dbReference>
<dbReference type="SUPFAM" id="SSF50475">
    <property type="entry name" value="FMN-binding split barrel"/>
    <property type="match status" value="1"/>
</dbReference>
<dbReference type="PROSITE" id="PS01064">
    <property type="entry name" value="PYRIDOX_OXIDASE"/>
    <property type="match status" value="1"/>
</dbReference>
<keyword id="KW-0285">Flavoprotein</keyword>
<keyword id="KW-0288">FMN</keyword>
<keyword id="KW-0560">Oxidoreductase</keyword>
<keyword id="KW-0664">Pyridoxine biosynthesis</keyword>
<keyword id="KW-1185">Reference proteome</keyword>